<sequence length="148" mass="16675">MKTVEIYTDGACKKNPGPGGWGAILIYGKNEKEIYGGELDTTNNRMELMAAIEALRALKQGCKVELYTDSQYVRKGITEWMQNWIKKGWRTSGGDPVKNVDLWQALDKERNKHDISWRWVKGHSGHPLNERADELANLGVKEALGETG</sequence>
<reference key="1">
    <citation type="journal article" date="2005" name="Nucleic Acids Res.">
        <title>Genomic blueprint of Hahella chejuensis, a marine microbe producing an algicidal agent.</title>
        <authorList>
            <person name="Jeong H."/>
            <person name="Yim J.H."/>
            <person name="Lee C."/>
            <person name="Choi S.-H."/>
            <person name="Park Y.K."/>
            <person name="Yoon S.H."/>
            <person name="Hur C.-G."/>
            <person name="Kang H.-Y."/>
            <person name="Kim D."/>
            <person name="Lee H.H."/>
            <person name="Park K.H."/>
            <person name="Park S.-H."/>
            <person name="Park H.-S."/>
            <person name="Lee H.K."/>
            <person name="Oh T.K."/>
            <person name="Kim J.F."/>
        </authorList>
    </citation>
    <scope>NUCLEOTIDE SEQUENCE [LARGE SCALE GENOMIC DNA]</scope>
    <source>
        <strain>KCTC 2396</strain>
    </source>
</reference>
<evidence type="ECO:0000255" key="1">
    <source>
        <dbReference type="HAMAP-Rule" id="MF_00042"/>
    </source>
</evidence>
<evidence type="ECO:0000255" key="2">
    <source>
        <dbReference type="PROSITE-ProRule" id="PRU00408"/>
    </source>
</evidence>
<keyword id="KW-0963">Cytoplasm</keyword>
<keyword id="KW-0255">Endonuclease</keyword>
<keyword id="KW-0378">Hydrolase</keyword>
<keyword id="KW-0460">Magnesium</keyword>
<keyword id="KW-0479">Metal-binding</keyword>
<keyword id="KW-0540">Nuclease</keyword>
<keyword id="KW-1185">Reference proteome</keyword>
<protein>
    <recommendedName>
        <fullName evidence="1">Ribonuclease H</fullName>
        <shortName evidence="1">RNase H</shortName>
        <ecNumber evidence="1">3.1.26.4</ecNumber>
    </recommendedName>
</protein>
<gene>
    <name evidence="1" type="primary">rnhA</name>
    <name type="ordered locus">HCH_02527</name>
</gene>
<accession>Q2SJ45</accession>
<name>RNH_HAHCH</name>
<organism>
    <name type="scientific">Hahella chejuensis (strain KCTC 2396)</name>
    <dbReference type="NCBI Taxonomy" id="349521"/>
    <lineage>
        <taxon>Bacteria</taxon>
        <taxon>Pseudomonadati</taxon>
        <taxon>Pseudomonadota</taxon>
        <taxon>Gammaproteobacteria</taxon>
        <taxon>Oceanospirillales</taxon>
        <taxon>Hahellaceae</taxon>
        <taxon>Hahella</taxon>
    </lineage>
</organism>
<proteinExistence type="inferred from homology"/>
<comment type="function">
    <text evidence="1">Endonuclease that specifically degrades the RNA of RNA-DNA hybrids.</text>
</comment>
<comment type="catalytic activity">
    <reaction evidence="1">
        <text>Endonucleolytic cleavage to 5'-phosphomonoester.</text>
        <dbReference type="EC" id="3.1.26.4"/>
    </reaction>
</comment>
<comment type="cofactor">
    <cofactor evidence="1">
        <name>Mg(2+)</name>
        <dbReference type="ChEBI" id="CHEBI:18420"/>
    </cofactor>
    <text evidence="1">Binds 1 Mg(2+) ion per subunit. May bind a second metal ion at a regulatory site, or after substrate binding.</text>
</comment>
<comment type="subunit">
    <text evidence="1">Monomer.</text>
</comment>
<comment type="subcellular location">
    <subcellularLocation>
        <location evidence="1">Cytoplasm</location>
    </subcellularLocation>
</comment>
<comment type="similarity">
    <text evidence="1">Belongs to the RNase H family.</text>
</comment>
<feature type="chain" id="PRO_0000332610" description="Ribonuclease H">
    <location>
        <begin position="1"/>
        <end position="148"/>
    </location>
</feature>
<feature type="domain" description="RNase H type-1" evidence="2">
    <location>
        <begin position="1"/>
        <end position="141"/>
    </location>
</feature>
<feature type="binding site" evidence="1">
    <location>
        <position position="9"/>
    </location>
    <ligand>
        <name>Mg(2+)</name>
        <dbReference type="ChEBI" id="CHEBI:18420"/>
        <label>1</label>
    </ligand>
</feature>
<feature type="binding site" evidence="1">
    <location>
        <position position="9"/>
    </location>
    <ligand>
        <name>Mg(2+)</name>
        <dbReference type="ChEBI" id="CHEBI:18420"/>
        <label>2</label>
    </ligand>
</feature>
<feature type="binding site" evidence="1">
    <location>
        <position position="47"/>
    </location>
    <ligand>
        <name>Mg(2+)</name>
        <dbReference type="ChEBI" id="CHEBI:18420"/>
        <label>1</label>
    </ligand>
</feature>
<feature type="binding site" evidence="1">
    <location>
        <position position="69"/>
    </location>
    <ligand>
        <name>Mg(2+)</name>
        <dbReference type="ChEBI" id="CHEBI:18420"/>
        <label>1</label>
    </ligand>
</feature>
<feature type="binding site" evidence="1">
    <location>
        <position position="133"/>
    </location>
    <ligand>
        <name>Mg(2+)</name>
        <dbReference type="ChEBI" id="CHEBI:18420"/>
        <label>2</label>
    </ligand>
</feature>
<dbReference type="EC" id="3.1.26.4" evidence="1"/>
<dbReference type="EMBL" id="CP000155">
    <property type="protein sequence ID" value="ABC29329.1"/>
    <property type="molecule type" value="Genomic_DNA"/>
</dbReference>
<dbReference type="RefSeq" id="WP_011396398.1">
    <property type="nucleotide sequence ID" value="NC_007645.1"/>
</dbReference>
<dbReference type="SMR" id="Q2SJ45"/>
<dbReference type="STRING" id="349521.HCH_02527"/>
<dbReference type="KEGG" id="hch:HCH_02527"/>
<dbReference type="eggNOG" id="COG0328">
    <property type="taxonomic scope" value="Bacteria"/>
</dbReference>
<dbReference type="HOGENOM" id="CLU_030894_6_0_6"/>
<dbReference type="OrthoDB" id="7845843at2"/>
<dbReference type="Proteomes" id="UP000000238">
    <property type="component" value="Chromosome"/>
</dbReference>
<dbReference type="GO" id="GO:0005737">
    <property type="term" value="C:cytoplasm"/>
    <property type="evidence" value="ECO:0007669"/>
    <property type="project" value="UniProtKB-SubCell"/>
</dbReference>
<dbReference type="GO" id="GO:0000287">
    <property type="term" value="F:magnesium ion binding"/>
    <property type="evidence" value="ECO:0007669"/>
    <property type="project" value="UniProtKB-UniRule"/>
</dbReference>
<dbReference type="GO" id="GO:0003676">
    <property type="term" value="F:nucleic acid binding"/>
    <property type="evidence" value="ECO:0007669"/>
    <property type="project" value="InterPro"/>
</dbReference>
<dbReference type="GO" id="GO:0004523">
    <property type="term" value="F:RNA-DNA hybrid ribonuclease activity"/>
    <property type="evidence" value="ECO:0007669"/>
    <property type="project" value="UniProtKB-UniRule"/>
</dbReference>
<dbReference type="GO" id="GO:0043137">
    <property type="term" value="P:DNA replication, removal of RNA primer"/>
    <property type="evidence" value="ECO:0007669"/>
    <property type="project" value="TreeGrafter"/>
</dbReference>
<dbReference type="CDD" id="cd09278">
    <property type="entry name" value="RNase_HI_prokaryote_like"/>
    <property type="match status" value="1"/>
</dbReference>
<dbReference type="FunFam" id="3.30.420.10:FF:000089">
    <property type="entry name" value="Ribonuclease H"/>
    <property type="match status" value="1"/>
</dbReference>
<dbReference type="Gene3D" id="3.30.420.10">
    <property type="entry name" value="Ribonuclease H-like superfamily/Ribonuclease H"/>
    <property type="match status" value="1"/>
</dbReference>
<dbReference type="HAMAP" id="MF_00042">
    <property type="entry name" value="RNase_H"/>
    <property type="match status" value="1"/>
</dbReference>
<dbReference type="InterPro" id="IPR050092">
    <property type="entry name" value="RNase_H"/>
</dbReference>
<dbReference type="InterPro" id="IPR012337">
    <property type="entry name" value="RNaseH-like_sf"/>
</dbReference>
<dbReference type="InterPro" id="IPR002156">
    <property type="entry name" value="RNaseH_domain"/>
</dbReference>
<dbReference type="InterPro" id="IPR036397">
    <property type="entry name" value="RNaseH_sf"/>
</dbReference>
<dbReference type="InterPro" id="IPR022892">
    <property type="entry name" value="RNaseHI"/>
</dbReference>
<dbReference type="NCBIfam" id="NF001236">
    <property type="entry name" value="PRK00203.1"/>
    <property type="match status" value="1"/>
</dbReference>
<dbReference type="PANTHER" id="PTHR10642">
    <property type="entry name" value="RIBONUCLEASE H1"/>
    <property type="match status" value="1"/>
</dbReference>
<dbReference type="PANTHER" id="PTHR10642:SF26">
    <property type="entry name" value="RIBONUCLEASE H1"/>
    <property type="match status" value="1"/>
</dbReference>
<dbReference type="Pfam" id="PF00075">
    <property type="entry name" value="RNase_H"/>
    <property type="match status" value="1"/>
</dbReference>
<dbReference type="SUPFAM" id="SSF53098">
    <property type="entry name" value="Ribonuclease H-like"/>
    <property type="match status" value="1"/>
</dbReference>
<dbReference type="PROSITE" id="PS50879">
    <property type="entry name" value="RNASE_H_1"/>
    <property type="match status" value="1"/>
</dbReference>